<keyword id="KW-0067">ATP-binding</keyword>
<keyword id="KW-0963">Cytoplasm</keyword>
<keyword id="KW-0460">Magnesium</keyword>
<keyword id="KW-0479">Metal-binding</keyword>
<keyword id="KW-0547">Nucleotide-binding</keyword>
<keyword id="KW-0554">One-carbon metabolism</keyword>
<keyword id="KW-0630">Potassium</keyword>
<keyword id="KW-1185">Reference proteome</keyword>
<keyword id="KW-0808">Transferase</keyword>
<proteinExistence type="inferred from homology"/>
<feature type="chain" id="PRO_0000240997" description="S-adenosylmethionine synthase">
    <location>
        <begin position="1"/>
        <end position="389"/>
    </location>
</feature>
<feature type="region of interest" description="Flexible loop" evidence="1">
    <location>
        <begin position="101"/>
        <end position="111"/>
    </location>
</feature>
<feature type="binding site" description="in other chain" evidence="1">
    <location>
        <position position="17"/>
    </location>
    <ligand>
        <name>ATP</name>
        <dbReference type="ChEBI" id="CHEBI:30616"/>
        <note>ligand shared between two neighboring subunits</note>
    </ligand>
</feature>
<feature type="binding site" evidence="1">
    <location>
        <position position="19"/>
    </location>
    <ligand>
        <name>Mg(2+)</name>
        <dbReference type="ChEBI" id="CHEBI:18420"/>
    </ligand>
</feature>
<feature type="binding site" evidence="1">
    <location>
        <position position="45"/>
    </location>
    <ligand>
        <name>K(+)</name>
        <dbReference type="ChEBI" id="CHEBI:29103"/>
    </ligand>
</feature>
<feature type="binding site" description="in other chain" evidence="1">
    <location>
        <position position="58"/>
    </location>
    <ligand>
        <name>L-methionine</name>
        <dbReference type="ChEBI" id="CHEBI:57844"/>
        <note>ligand shared between two neighboring subunits</note>
    </ligand>
</feature>
<feature type="binding site" description="in other chain" evidence="1">
    <location>
        <position position="101"/>
    </location>
    <ligand>
        <name>L-methionine</name>
        <dbReference type="ChEBI" id="CHEBI:57844"/>
        <note>ligand shared between two neighboring subunits</note>
    </ligand>
</feature>
<feature type="binding site" description="in other chain" evidence="1">
    <location>
        <begin position="168"/>
        <end position="170"/>
    </location>
    <ligand>
        <name>ATP</name>
        <dbReference type="ChEBI" id="CHEBI:30616"/>
        <note>ligand shared between two neighboring subunits</note>
    </ligand>
</feature>
<feature type="binding site" description="in other chain" evidence="1">
    <location>
        <begin position="234"/>
        <end position="235"/>
    </location>
    <ligand>
        <name>ATP</name>
        <dbReference type="ChEBI" id="CHEBI:30616"/>
        <note>ligand shared between two neighboring subunits</note>
    </ligand>
</feature>
<feature type="binding site" evidence="1">
    <location>
        <position position="243"/>
    </location>
    <ligand>
        <name>ATP</name>
        <dbReference type="ChEBI" id="CHEBI:30616"/>
        <note>ligand shared between two neighboring subunits</note>
    </ligand>
</feature>
<feature type="binding site" evidence="1">
    <location>
        <position position="243"/>
    </location>
    <ligand>
        <name>L-methionine</name>
        <dbReference type="ChEBI" id="CHEBI:57844"/>
        <note>ligand shared between two neighboring subunits</note>
    </ligand>
</feature>
<feature type="binding site" description="in other chain" evidence="1">
    <location>
        <begin position="249"/>
        <end position="250"/>
    </location>
    <ligand>
        <name>ATP</name>
        <dbReference type="ChEBI" id="CHEBI:30616"/>
        <note>ligand shared between two neighboring subunits</note>
    </ligand>
</feature>
<feature type="binding site" evidence="1">
    <location>
        <position position="266"/>
    </location>
    <ligand>
        <name>ATP</name>
        <dbReference type="ChEBI" id="CHEBI:30616"/>
        <note>ligand shared between two neighboring subunits</note>
    </ligand>
</feature>
<feature type="binding site" evidence="1">
    <location>
        <position position="270"/>
    </location>
    <ligand>
        <name>ATP</name>
        <dbReference type="ChEBI" id="CHEBI:30616"/>
        <note>ligand shared between two neighboring subunits</note>
    </ligand>
</feature>
<feature type="binding site" description="in other chain" evidence="1">
    <location>
        <position position="274"/>
    </location>
    <ligand>
        <name>L-methionine</name>
        <dbReference type="ChEBI" id="CHEBI:57844"/>
        <note>ligand shared between two neighboring subunits</note>
    </ligand>
</feature>
<sequence>MEMKDYIFTSESVSEGHPDKVADQVSDSILDAILAQDPRARVACETLVTTGMAVIAGEITTSAVVDYPKVVRETIREIGYNDSAMGFDWETCAVLVSIDKQSPDISQGVTEGEGMFKEQGAGDQGLMFGYACTETPELMPMSITYAHKLTQKLAEVRKNGVLDFLRPDSKSQVSVEYVDDKPVRVDTVVISSQHTPEVSYEAIKEGIIEEVVKKIIPAHLMDERTRMLINPTGRFVVGGPMGDCGLTGRKIIVDSYGGHGAHGGGAFSGKDPSKVDRSAAYMGRYVAKNLVAAGLCEKCEVQVAYAIGVAEPVSVMVDTAGTGKISSKRIAEIVREVFDLRPRAIIEQLDLLRPIYRKTAAYGHFGRELPEFTWERTDKVYMIRQKAGI</sequence>
<name>METK_GEOMG</name>
<dbReference type="EC" id="2.5.1.6" evidence="1"/>
<dbReference type="EMBL" id="CP000148">
    <property type="protein sequence ID" value="ABB31526.1"/>
    <property type="molecule type" value="Genomic_DNA"/>
</dbReference>
<dbReference type="RefSeq" id="WP_004512076.1">
    <property type="nucleotide sequence ID" value="NC_007517.1"/>
</dbReference>
<dbReference type="SMR" id="Q39W48"/>
<dbReference type="STRING" id="269799.Gmet_1290"/>
<dbReference type="KEGG" id="gme:Gmet_1290"/>
<dbReference type="eggNOG" id="COG0192">
    <property type="taxonomic scope" value="Bacteria"/>
</dbReference>
<dbReference type="HOGENOM" id="CLU_041802_1_1_7"/>
<dbReference type="UniPathway" id="UPA00315">
    <property type="reaction ID" value="UER00080"/>
</dbReference>
<dbReference type="Proteomes" id="UP000007073">
    <property type="component" value="Chromosome"/>
</dbReference>
<dbReference type="GO" id="GO:0005737">
    <property type="term" value="C:cytoplasm"/>
    <property type="evidence" value="ECO:0007669"/>
    <property type="project" value="UniProtKB-SubCell"/>
</dbReference>
<dbReference type="GO" id="GO:0005524">
    <property type="term" value="F:ATP binding"/>
    <property type="evidence" value="ECO:0007669"/>
    <property type="project" value="UniProtKB-UniRule"/>
</dbReference>
<dbReference type="GO" id="GO:0000287">
    <property type="term" value="F:magnesium ion binding"/>
    <property type="evidence" value="ECO:0007669"/>
    <property type="project" value="UniProtKB-UniRule"/>
</dbReference>
<dbReference type="GO" id="GO:0004478">
    <property type="term" value="F:methionine adenosyltransferase activity"/>
    <property type="evidence" value="ECO:0007669"/>
    <property type="project" value="UniProtKB-UniRule"/>
</dbReference>
<dbReference type="GO" id="GO:0006730">
    <property type="term" value="P:one-carbon metabolic process"/>
    <property type="evidence" value="ECO:0007669"/>
    <property type="project" value="UniProtKB-KW"/>
</dbReference>
<dbReference type="GO" id="GO:0006556">
    <property type="term" value="P:S-adenosylmethionine biosynthetic process"/>
    <property type="evidence" value="ECO:0007669"/>
    <property type="project" value="UniProtKB-UniRule"/>
</dbReference>
<dbReference type="CDD" id="cd18079">
    <property type="entry name" value="S-AdoMet_synt"/>
    <property type="match status" value="1"/>
</dbReference>
<dbReference type="FunFam" id="3.30.300.10:FF:000003">
    <property type="entry name" value="S-adenosylmethionine synthase"/>
    <property type="match status" value="1"/>
</dbReference>
<dbReference type="FunFam" id="3.30.300.10:FF:000004">
    <property type="entry name" value="S-adenosylmethionine synthase"/>
    <property type="match status" value="1"/>
</dbReference>
<dbReference type="Gene3D" id="3.30.300.10">
    <property type="match status" value="3"/>
</dbReference>
<dbReference type="HAMAP" id="MF_00086">
    <property type="entry name" value="S_AdoMet_synth1"/>
    <property type="match status" value="1"/>
</dbReference>
<dbReference type="InterPro" id="IPR022631">
    <property type="entry name" value="ADOMET_SYNTHASE_CS"/>
</dbReference>
<dbReference type="InterPro" id="IPR022630">
    <property type="entry name" value="S-AdoMet_synt_C"/>
</dbReference>
<dbReference type="InterPro" id="IPR022629">
    <property type="entry name" value="S-AdoMet_synt_central"/>
</dbReference>
<dbReference type="InterPro" id="IPR022628">
    <property type="entry name" value="S-AdoMet_synt_N"/>
</dbReference>
<dbReference type="InterPro" id="IPR002133">
    <property type="entry name" value="S-AdoMet_synthetase"/>
</dbReference>
<dbReference type="InterPro" id="IPR022636">
    <property type="entry name" value="S-AdoMet_synthetase_sfam"/>
</dbReference>
<dbReference type="NCBIfam" id="TIGR01034">
    <property type="entry name" value="metK"/>
    <property type="match status" value="1"/>
</dbReference>
<dbReference type="PANTHER" id="PTHR11964">
    <property type="entry name" value="S-ADENOSYLMETHIONINE SYNTHETASE"/>
    <property type="match status" value="1"/>
</dbReference>
<dbReference type="Pfam" id="PF02773">
    <property type="entry name" value="S-AdoMet_synt_C"/>
    <property type="match status" value="1"/>
</dbReference>
<dbReference type="Pfam" id="PF02772">
    <property type="entry name" value="S-AdoMet_synt_M"/>
    <property type="match status" value="1"/>
</dbReference>
<dbReference type="Pfam" id="PF00438">
    <property type="entry name" value="S-AdoMet_synt_N"/>
    <property type="match status" value="1"/>
</dbReference>
<dbReference type="PIRSF" id="PIRSF000497">
    <property type="entry name" value="MAT"/>
    <property type="match status" value="1"/>
</dbReference>
<dbReference type="SUPFAM" id="SSF55973">
    <property type="entry name" value="S-adenosylmethionine synthetase"/>
    <property type="match status" value="3"/>
</dbReference>
<dbReference type="PROSITE" id="PS00376">
    <property type="entry name" value="ADOMET_SYNTHASE_1"/>
    <property type="match status" value="1"/>
</dbReference>
<dbReference type="PROSITE" id="PS00377">
    <property type="entry name" value="ADOMET_SYNTHASE_2"/>
    <property type="match status" value="1"/>
</dbReference>
<evidence type="ECO:0000255" key="1">
    <source>
        <dbReference type="HAMAP-Rule" id="MF_00086"/>
    </source>
</evidence>
<reference key="1">
    <citation type="journal article" date="2009" name="BMC Microbiol.">
        <title>The genome sequence of Geobacter metallireducens: features of metabolism, physiology and regulation common and dissimilar to Geobacter sulfurreducens.</title>
        <authorList>
            <person name="Aklujkar M."/>
            <person name="Krushkal J."/>
            <person name="DiBartolo G."/>
            <person name="Lapidus A."/>
            <person name="Land M.L."/>
            <person name="Lovley D.R."/>
        </authorList>
    </citation>
    <scope>NUCLEOTIDE SEQUENCE [LARGE SCALE GENOMIC DNA]</scope>
    <source>
        <strain>ATCC 53774 / DSM 7210 / GS-15</strain>
    </source>
</reference>
<accession>Q39W48</accession>
<organism>
    <name type="scientific">Geobacter metallireducens (strain ATCC 53774 / DSM 7210 / GS-15)</name>
    <dbReference type="NCBI Taxonomy" id="269799"/>
    <lineage>
        <taxon>Bacteria</taxon>
        <taxon>Pseudomonadati</taxon>
        <taxon>Thermodesulfobacteriota</taxon>
        <taxon>Desulfuromonadia</taxon>
        <taxon>Geobacterales</taxon>
        <taxon>Geobacteraceae</taxon>
        <taxon>Geobacter</taxon>
    </lineage>
</organism>
<comment type="function">
    <text evidence="1">Catalyzes the formation of S-adenosylmethionine (AdoMet) from methionine and ATP. The overall synthetic reaction is composed of two sequential steps, AdoMet formation and the subsequent tripolyphosphate hydrolysis which occurs prior to release of AdoMet from the enzyme.</text>
</comment>
<comment type="catalytic activity">
    <reaction evidence="1">
        <text>L-methionine + ATP + H2O = S-adenosyl-L-methionine + phosphate + diphosphate</text>
        <dbReference type="Rhea" id="RHEA:21080"/>
        <dbReference type="ChEBI" id="CHEBI:15377"/>
        <dbReference type="ChEBI" id="CHEBI:30616"/>
        <dbReference type="ChEBI" id="CHEBI:33019"/>
        <dbReference type="ChEBI" id="CHEBI:43474"/>
        <dbReference type="ChEBI" id="CHEBI:57844"/>
        <dbReference type="ChEBI" id="CHEBI:59789"/>
        <dbReference type="EC" id="2.5.1.6"/>
    </reaction>
</comment>
<comment type="cofactor">
    <cofactor evidence="1">
        <name>Mg(2+)</name>
        <dbReference type="ChEBI" id="CHEBI:18420"/>
    </cofactor>
    <text evidence="1">Binds 2 divalent ions per subunit.</text>
</comment>
<comment type="cofactor">
    <cofactor evidence="1">
        <name>K(+)</name>
        <dbReference type="ChEBI" id="CHEBI:29103"/>
    </cofactor>
    <text evidence="1">Binds 1 potassium ion per subunit.</text>
</comment>
<comment type="pathway">
    <text evidence="1">Amino-acid biosynthesis; S-adenosyl-L-methionine biosynthesis; S-adenosyl-L-methionine from L-methionine: step 1/1.</text>
</comment>
<comment type="subunit">
    <text evidence="1">Homotetramer; dimer of dimers.</text>
</comment>
<comment type="subcellular location">
    <subcellularLocation>
        <location evidence="1">Cytoplasm</location>
    </subcellularLocation>
</comment>
<comment type="similarity">
    <text evidence="1">Belongs to the AdoMet synthase family.</text>
</comment>
<gene>
    <name evidence="1" type="primary">metK</name>
    <name type="ordered locus">Gmet_1290</name>
</gene>
<protein>
    <recommendedName>
        <fullName evidence="1">S-adenosylmethionine synthase</fullName>
        <shortName evidence="1">AdoMet synthase</shortName>
        <ecNumber evidence="1">2.5.1.6</ecNumber>
    </recommendedName>
    <alternativeName>
        <fullName evidence="1">MAT</fullName>
    </alternativeName>
    <alternativeName>
        <fullName evidence="1">Methionine adenosyltransferase</fullName>
    </alternativeName>
</protein>